<keyword id="KW-1003">Cell membrane</keyword>
<keyword id="KW-0472">Membrane</keyword>
<keyword id="KW-0597">Phosphoprotein</keyword>
<keyword id="KW-1185">Reference proteome</keyword>
<keyword id="KW-0735">Signal-anchor</keyword>
<keyword id="KW-0812">Transmembrane</keyword>
<keyword id="KW-1133">Transmembrane helix</keyword>
<name>STML3_MOUSE</name>
<protein>
    <recommendedName>
        <fullName>Stomatin-like protein 3</fullName>
        <shortName>SLP-3</shortName>
    </recommendedName>
    <alternativeName>
        <fullName>Stomatin-related olfactory protein</fullName>
    </alternativeName>
</protein>
<reference key="1">
    <citation type="journal article" date="2002" name="J. Neurosci.">
        <title>Stomatin-related olfactory protein, SRO, specifically expressed in the murine olfactory sensory neurons.</title>
        <authorList>
            <person name="Kobayakawa K."/>
            <person name="Hayashi R."/>
            <person name="Morita K."/>
            <person name="Miyamichi K."/>
            <person name="Oka Y."/>
            <person name="Tsuboi A."/>
            <person name="Sakano H."/>
        </authorList>
    </citation>
    <scope>NUCLEOTIDE SEQUENCE [MRNA]</scope>
    <scope>SUBCELLULAR LOCATION</scope>
    <scope>TISSUE SPECIFICITY</scope>
</reference>
<reference key="2">
    <citation type="journal article" date="2004" name="Genome Res.">
        <title>The status, quality, and expansion of the NIH full-length cDNA project: the Mammalian Gene Collection (MGC).</title>
        <authorList>
            <consortium name="The MGC Project Team"/>
        </authorList>
    </citation>
    <scope>NUCLEOTIDE SEQUENCE [LARGE SCALE MRNA]</scope>
    <source>
        <tissue>Brain</tissue>
        <tissue>Olfactory epithelium</tissue>
    </source>
</reference>
<reference key="3">
    <citation type="journal article" date="2007" name="Nature">
        <title>A stomatin-domain protein essential for touch sensation in the mouse.</title>
        <authorList>
            <person name="Wetzel C."/>
            <person name="Hu J."/>
            <person name="Riethmacher D."/>
            <person name="Benckendorff A."/>
            <person name="Harder L."/>
            <person name="Eilers A."/>
            <person name="Moshourab R."/>
            <person name="Kozlenkov A."/>
            <person name="Labuz D."/>
            <person name="Caspani O."/>
            <person name="Erdmann B."/>
            <person name="Machelska H."/>
            <person name="Heppenstall P.A."/>
            <person name="Lewin G.R."/>
        </authorList>
    </citation>
    <scope>DISRUPTION PHENOTYPE</scope>
    <scope>TISSUE SPECIFICITY</scope>
</reference>
<reference key="4">
    <citation type="journal article" date="2014" name="Nat. Commun.">
        <title>Tuning Piezo ion channels to detect molecular-scale movements relevant for fine touch.</title>
        <authorList>
            <person name="Poole K."/>
            <person name="Herget R."/>
            <person name="Lapatsina L."/>
            <person name="Ngo H.D."/>
            <person name="Lewin G.R."/>
        </authorList>
    </citation>
    <scope>INTERACTION WITH PIEZO1 AND PIEZO2</scope>
    <scope>MUTAGENESIS OF PRO-40; 89-LEU-ARG-90; ARG-90 AND VAL-190</scope>
    <scope>FUNCTION</scope>
    <scope>SUBCELLULAR LOCATION</scope>
</reference>
<accession>Q6PE84</accession>
<accession>Q66JM3</accession>
<accession>Q8K4P4</accession>
<gene>
    <name type="primary">Stoml3</name>
    <name type="synonym">Sro</name>
</gene>
<dbReference type="EMBL" id="AB085692">
    <property type="protein sequence ID" value="BAC05692.1"/>
    <property type="molecule type" value="mRNA"/>
</dbReference>
<dbReference type="EMBL" id="BC058224">
    <property type="protein sequence ID" value="AAH58224.1"/>
    <property type="status" value="ALT_INIT"/>
    <property type="molecule type" value="mRNA"/>
</dbReference>
<dbReference type="EMBL" id="BC080859">
    <property type="protein sequence ID" value="AAH80859.1"/>
    <property type="status" value="ALT_INIT"/>
    <property type="molecule type" value="mRNA"/>
</dbReference>
<dbReference type="CCDS" id="CCDS17347.1"/>
<dbReference type="RefSeq" id="NP_694796.1">
    <property type="nucleotide sequence ID" value="NM_153156.2"/>
</dbReference>
<dbReference type="SMR" id="Q6PE84"/>
<dbReference type="BioGRID" id="230826">
    <property type="interactions" value="2"/>
</dbReference>
<dbReference type="FunCoup" id="Q6PE84">
    <property type="interactions" value="14"/>
</dbReference>
<dbReference type="STRING" id="10090.ENSMUSP00000029307"/>
<dbReference type="PhosphoSitePlus" id="Q6PE84"/>
<dbReference type="jPOST" id="Q6PE84"/>
<dbReference type="PaxDb" id="10090-ENSMUSP00000029307"/>
<dbReference type="ProteomicsDB" id="254592"/>
<dbReference type="Antibodypedia" id="2442">
    <property type="antibodies" value="101 antibodies from 17 providers"/>
</dbReference>
<dbReference type="DNASU" id="229277"/>
<dbReference type="Ensembl" id="ENSMUST00000029307.4">
    <property type="protein sequence ID" value="ENSMUSP00000029307.4"/>
    <property type="gene ID" value="ENSMUSG00000027744.5"/>
</dbReference>
<dbReference type="GeneID" id="229277"/>
<dbReference type="KEGG" id="mmu:229277"/>
<dbReference type="UCSC" id="uc008pew.1">
    <property type="organism name" value="mouse"/>
</dbReference>
<dbReference type="AGR" id="MGI:2388072"/>
<dbReference type="CTD" id="161003"/>
<dbReference type="MGI" id="MGI:2388072">
    <property type="gene designation" value="Stoml3"/>
</dbReference>
<dbReference type="VEuPathDB" id="HostDB:ENSMUSG00000027744"/>
<dbReference type="eggNOG" id="KOG2621">
    <property type="taxonomic scope" value="Eukaryota"/>
</dbReference>
<dbReference type="GeneTree" id="ENSGT01030000234614"/>
<dbReference type="HOGENOM" id="CLU_024949_3_0_1"/>
<dbReference type="InParanoid" id="Q6PE84"/>
<dbReference type="OMA" id="GRIQANK"/>
<dbReference type="OrthoDB" id="2105077at2759"/>
<dbReference type="PhylomeDB" id="Q6PE84"/>
<dbReference type="TreeFam" id="TF105750"/>
<dbReference type="Reactome" id="R-MMU-2672351">
    <property type="pathway name" value="Stimuli-sensing channels"/>
</dbReference>
<dbReference type="BioGRID-ORCS" id="229277">
    <property type="hits" value="4 hits in 78 CRISPR screens"/>
</dbReference>
<dbReference type="ChiTaRS" id="Stoml3">
    <property type="organism name" value="mouse"/>
</dbReference>
<dbReference type="PRO" id="PR:Q6PE84"/>
<dbReference type="Proteomes" id="UP000000589">
    <property type="component" value="Chromosome 3"/>
</dbReference>
<dbReference type="RNAct" id="Q6PE84">
    <property type="molecule type" value="protein"/>
</dbReference>
<dbReference type="Bgee" id="ENSMUSG00000027744">
    <property type="expression patterns" value="Expressed in olfactory epithelium and 25 other cell types or tissues"/>
</dbReference>
<dbReference type="ExpressionAtlas" id="Q6PE84">
    <property type="expression patterns" value="baseline and differential"/>
</dbReference>
<dbReference type="GO" id="GO:0005929">
    <property type="term" value="C:cilium"/>
    <property type="evidence" value="ECO:0000314"/>
    <property type="project" value="MGI"/>
</dbReference>
<dbReference type="GO" id="GO:0045121">
    <property type="term" value="C:membrane raft"/>
    <property type="evidence" value="ECO:0000314"/>
    <property type="project" value="MGI"/>
</dbReference>
<dbReference type="GO" id="GO:0043005">
    <property type="term" value="C:neuron projection"/>
    <property type="evidence" value="ECO:0000314"/>
    <property type="project" value="MGI"/>
</dbReference>
<dbReference type="GO" id="GO:0005886">
    <property type="term" value="C:plasma membrane"/>
    <property type="evidence" value="ECO:0007669"/>
    <property type="project" value="UniProtKB-SubCell"/>
</dbReference>
<dbReference type="GO" id="GO:0007165">
    <property type="term" value="P:signal transduction"/>
    <property type="evidence" value="ECO:0000314"/>
    <property type="project" value="MGI"/>
</dbReference>
<dbReference type="FunFam" id="3.30.479.30:FF:000002">
    <property type="entry name" value="band 7 protein AGAP004871"/>
    <property type="match status" value="1"/>
</dbReference>
<dbReference type="Gene3D" id="6.10.250.2090">
    <property type="match status" value="1"/>
</dbReference>
<dbReference type="Gene3D" id="3.30.479.30">
    <property type="entry name" value="Band 7 domain"/>
    <property type="match status" value="1"/>
</dbReference>
<dbReference type="InterPro" id="IPR043202">
    <property type="entry name" value="Band-7_stomatin-like"/>
</dbReference>
<dbReference type="InterPro" id="IPR001107">
    <property type="entry name" value="Band_7"/>
</dbReference>
<dbReference type="InterPro" id="IPR036013">
    <property type="entry name" value="Band_7/SPFH_dom_sf"/>
</dbReference>
<dbReference type="InterPro" id="IPR018080">
    <property type="entry name" value="Band_7/stomatin-like_CS"/>
</dbReference>
<dbReference type="InterPro" id="IPR001972">
    <property type="entry name" value="Stomatin_HflK_fam"/>
</dbReference>
<dbReference type="PANTHER" id="PTHR10264">
    <property type="entry name" value="BAND 7 PROTEIN-RELATED"/>
    <property type="match status" value="1"/>
</dbReference>
<dbReference type="PANTHER" id="PTHR10264:SF49">
    <property type="entry name" value="STOMATIN-LIKE PROTEIN 3"/>
    <property type="match status" value="1"/>
</dbReference>
<dbReference type="Pfam" id="PF01145">
    <property type="entry name" value="Band_7"/>
    <property type="match status" value="1"/>
</dbReference>
<dbReference type="PRINTS" id="PR00721">
    <property type="entry name" value="STOMATIN"/>
</dbReference>
<dbReference type="SMART" id="SM00244">
    <property type="entry name" value="PHB"/>
    <property type="match status" value="1"/>
</dbReference>
<dbReference type="SUPFAM" id="SSF117892">
    <property type="entry name" value="Band 7/SPFH domain"/>
    <property type="match status" value="1"/>
</dbReference>
<dbReference type="PROSITE" id="PS01270">
    <property type="entry name" value="BAND_7"/>
    <property type="match status" value="1"/>
</dbReference>
<feature type="chain" id="PRO_0000094034" description="Stomatin-like protein 3">
    <location>
        <begin position="1"/>
        <end position="287"/>
    </location>
</feature>
<feature type="transmembrane region" description="Helical; Signal-anchor for type III membrane protein" evidence="2">
    <location>
        <begin position="25"/>
        <end position="45"/>
    </location>
</feature>
<feature type="topological domain" description="Cytoplasmic" evidence="2">
    <location>
        <begin position="46"/>
        <end position="287"/>
    </location>
</feature>
<feature type="modified residue" description="Phosphoserine" evidence="1">
    <location>
        <position position="3"/>
    </location>
</feature>
<feature type="modified residue" description="Phosphoserine" evidence="1">
    <location>
        <position position="237"/>
    </location>
</feature>
<feature type="mutagenesis site" description="Mis-localization predominantly to the cytoplasmic compartment." evidence="5">
    <original>P</original>
    <variation>S</variation>
    <location>
        <position position="40"/>
    </location>
</feature>
<feature type="mutagenesis site" description="Abolishes the activity of STOML3." evidence="5">
    <original>LR</original>
    <variation>EE</variation>
    <location>
        <begin position="89"/>
        <end position="90"/>
    </location>
</feature>
<feature type="mutagenesis site" description="Abolishes STOML3 modulation of mechanosensitive currents." evidence="5">
    <original>R</original>
    <variation>S</variation>
    <location>
        <position position="90"/>
    </location>
</feature>
<feature type="mutagenesis site" description="Reduced oligomerization. Does not sensitize mechanically gated currents." evidence="5">
    <original>V</original>
    <variation>P</variation>
    <location>
        <position position="190"/>
    </location>
</feature>
<feature type="sequence conflict" description="In Ref. 2; AAH80859." evidence="6" ref="2">
    <original>E</original>
    <variation>V</variation>
    <location>
        <position position="220"/>
    </location>
</feature>
<evidence type="ECO:0000250" key="1">
    <source>
        <dbReference type="UniProtKB" id="P27105"/>
    </source>
</evidence>
<evidence type="ECO:0000255" key="2"/>
<evidence type="ECO:0000269" key="3">
    <source>
    </source>
</evidence>
<evidence type="ECO:0000269" key="4">
    <source>
    </source>
</evidence>
<evidence type="ECO:0000269" key="5">
    <source>
    </source>
</evidence>
<evidence type="ECO:0000305" key="6"/>
<comment type="function">
    <text evidence="5">Required for the function of many mechanoreceptors. Modulate mechanotransduction channels and acid-sensing ion channels (ASIC) proteins. Potentiates PIEZO1 and PIEZO2 function by increasing their sensitivity to mechanical stimulations.</text>
</comment>
<comment type="subunit">
    <text evidence="5">Homodimer. Interacts with PIEZO1 and PIEZO2.</text>
</comment>
<comment type="subcellular location">
    <subcellularLocation>
        <location evidence="3 5">Cell membrane</location>
        <topology evidence="3">Single-pass type III membrane protein</topology>
    </subcellularLocation>
    <text>Detected in lipid rafts, in apical dendrites and in olfactory cilia.</text>
</comment>
<comment type="tissue specificity">
    <text evidence="3 4">Expressed by all dorsal root ganglion neurons and is selectively expressed in neuronal tissues. Detected in olfactory epithelium.</text>
</comment>
<comment type="disruption phenotype">
    <text evidence="4">In deficient mice 35% of skin mechanoreceptors do not respond to mechanical stimuli. In addition, mechanosensitive ion channels find in many sensory neurons do not function. Tactile-driven behaviors are also impaired in mutant mice, including touch-evoked pain caused by neuropathic injury.</text>
</comment>
<comment type="similarity">
    <text evidence="6">Belongs to the band 7/mec-2 family.</text>
</comment>
<comment type="sequence caution" evidence="6">
    <conflict type="erroneous initiation">
        <sequence resource="EMBL-CDS" id="AAH58224"/>
    </conflict>
</comment>
<comment type="sequence caution" evidence="6">
    <conflict type="erroneous initiation">
        <sequence resource="EMBL-CDS" id="AAH80859"/>
    </conflict>
</comment>
<proteinExistence type="evidence at protein level"/>
<sequence length="287" mass="31591">MDSPEKLEKNNLVGTNKSRLGVCGWILFFLSFLLMLVTFPISVWMCLKIIKEYERAVVFRLGRIQADKAKGPGLILVLPCIDVFVKVDLRTVTCNIPPQEILTRDSVTTQVDGVVYYRIYSAVSAVANVNDVHQATFLLAQTTLRNVLGTQTLSQILSGREEIAHSIQTLLDDATELWGIRVARVEIKDVRIPVQLQRSMAAEAEATREARAKVLAAEGEMNASKSLKSASMVLAESPVALQLRYLQTLTTVATEKNSTIVFPLPMNILEGIGGISYGNNKKVTAKA</sequence>
<organism>
    <name type="scientific">Mus musculus</name>
    <name type="common">Mouse</name>
    <dbReference type="NCBI Taxonomy" id="10090"/>
    <lineage>
        <taxon>Eukaryota</taxon>
        <taxon>Metazoa</taxon>
        <taxon>Chordata</taxon>
        <taxon>Craniata</taxon>
        <taxon>Vertebrata</taxon>
        <taxon>Euteleostomi</taxon>
        <taxon>Mammalia</taxon>
        <taxon>Eutheria</taxon>
        <taxon>Euarchontoglires</taxon>
        <taxon>Glires</taxon>
        <taxon>Rodentia</taxon>
        <taxon>Myomorpha</taxon>
        <taxon>Muroidea</taxon>
        <taxon>Muridae</taxon>
        <taxon>Murinae</taxon>
        <taxon>Mus</taxon>
        <taxon>Mus</taxon>
    </lineage>
</organism>